<gene>
    <name evidence="7" type="primary">orfC</name>
    <name evidence="7" type="ordered locus">LIC_10793</name>
</gene>
<proteinExistence type="evidence at protein level"/>
<reference evidence="7 8" key="1">
    <citation type="journal article" date="2004" name="J. Bacteriol.">
        <title>Comparative genomics of two Leptospira interrogans serovars reveals novel insights into physiology and pathogenesis.</title>
        <authorList>
            <person name="Nascimento A.L.T.O."/>
            <person name="Ko A.I."/>
            <person name="Martins E.A.L."/>
            <person name="Monteiro-Vitorello C.B."/>
            <person name="Ho P.L."/>
            <person name="Haake D.A."/>
            <person name="Verjovski-Almeida S."/>
            <person name="Hartskeerl R.A."/>
            <person name="Marques M.V."/>
            <person name="Oliveira M.C."/>
            <person name="Menck C.F.M."/>
            <person name="Leite L.C.C."/>
            <person name="Carrer H."/>
            <person name="Coutinho L.L."/>
            <person name="Degrave W.M."/>
            <person name="Dellagostin O.A."/>
            <person name="El-Dorry H."/>
            <person name="Ferro E.S."/>
            <person name="Ferro M.I.T."/>
            <person name="Furlan L.R."/>
            <person name="Gamberini M."/>
            <person name="Giglioti E.A."/>
            <person name="Goes-Neto A."/>
            <person name="Goldman G.H."/>
            <person name="Goldman M.H.S."/>
            <person name="Harakava R."/>
            <person name="Jeronimo S.M.B."/>
            <person name="Junqueira-de-Azevedo I.L.M."/>
            <person name="Kimura E.T."/>
            <person name="Kuramae E.E."/>
            <person name="Lemos E.G.M."/>
            <person name="Lemos M.V.F."/>
            <person name="Marino C.L."/>
            <person name="Nunes L.R."/>
            <person name="de Oliveira R.C."/>
            <person name="Pereira G.G."/>
            <person name="Reis M.S."/>
            <person name="Schriefer A."/>
            <person name="Siqueira W.J."/>
            <person name="Sommer P."/>
            <person name="Tsai S.M."/>
            <person name="Simpson A.J.G."/>
            <person name="Ferro J.A."/>
            <person name="Camargo L.E.A."/>
            <person name="Kitajima J.P."/>
            <person name="Setubal J.C."/>
            <person name="Van Sluys M.A."/>
        </authorList>
    </citation>
    <scope>NUCLEOTIDE SEQUENCE [LARGE SCALE GENOMIC DNA]</scope>
    <source>
        <strain evidence="7 8">Fiocruz L1-130</strain>
    </source>
</reference>
<reference key="2">
    <citation type="journal article" date="2007" name="Arch. Microbiol.">
        <title>Identification of a novel potential antigen for early-phase serodiagnosis of leptospirosis.</title>
        <authorList>
            <person name="Neves F.O."/>
            <person name="Abreu P.A."/>
            <person name="Vasconcellos S.A."/>
            <person name="de Morais Z.M."/>
            <person name="Romero E.C."/>
            <person name="Nascimento A.L."/>
        </authorList>
    </citation>
    <scope>SUBCELLULAR LOCATION</scope>
    <scope>BIOTECHNOLOGY</scope>
    <scope>CIRCULAR DICHROISM</scope>
</reference>
<reference key="3">
    <citation type="journal article" date="2010" name="PLoS ONE">
        <title>In vitro identification of novel plasminogen-binding receptors of the pathogen Leptospira interrogans.</title>
        <authorList>
            <person name="Vieira M.L."/>
            <person name="Atzingen M.V."/>
            <person name="Oliveira T.R."/>
            <person name="Oliveira R."/>
            <person name="Andrade D.M."/>
            <person name="Vasconcellos S.A."/>
            <person name="Nascimento A.L."/>
        </authorList>
    </citation>
    <scope>FUNCTION</scope>
    <scope>SUBCELLULAR LOCATION</scope>
</reference>
<reference evidence="9" key="4">
    <citation type="journal article" date="2008" name="J. Struct. Biol.">
        <title>The leptospiral antigen Lp49 is a two-domain protein with putative protein binding function.</title>
        <authorList>
            <person name="Giuseppe P.O."/>
            <person name="Neves F.O."/>
            <person name="Nascimento A.L."/>
            <person name="Guimaraes B.G."/>
        </authorList>
    </citation>
    <scope>X-RAY CRYSTALLOGRAPHY (1.99 ANGSTROMS) OF 34-456</scope>
    <scope>DISULFIDE BOND</scope>
</reference>
<accession>Q72U69</accession>
<organism evidence="7">
    <name type="scientific">Leptospira interrogans serogroup Icterohaemorrhagiae serovar copenhageni (strain Fiocruz L1-130)</name>
    <dbReference type="NCBI Taxonomy" id="267671"/>
    <lineage>
        <taxon>Bacteria</taxon>
        <taxon>Pseudomonadati</taxon>
        <taxon>Spirochaetota</taxon>
        <taxon>Spirochaetia</taxon>
        <taxon>Leptospirales</taxon>
        <taxon>Leptospiraceae</taxon>
        <taxon>Leptospira</taxon>
    </lineage>
</organism>
<keyword id="KW-0002">3D-structure</keyword>
<keyword id="KW-0998">Cell outer membrane</keyword>
<keyword id="KW-1015">Disulfide bond</keyword>
<keyword id="KW-0449">Lipoprotein</keyword>
<keyword id="KW-0472">Membrane</keyword>
<keyword id="KW-0732">Signal</keyword>
<feature type="signal peptide" evidence="1">
    <location>
        <begin position="1"/>
        <end position="34"/>
    </location>
</feature>
<feature type="chain" id="PRO_0000436553" description="Antigen Lp49">
    <location>
        <begin position="35"/>
        <end position="456"/>
    </location>
</feature>
<feature type="disulfide bond" evidence="3 9">
    <location>
        <begin position="346"/>
        <end position="347"/>
    </location>
</feature>
<feature type="strand" evidence="10">
    <location>
        <begin position="51"/>
        <end position="59"/>
    </location>
</feature>
<feature type="strand" evidence="10">
    <location>
        <begin position="65"/>
        <end position="68"/>
    </location>
</feature>
<feature type="strand" evidence="10">
    <location>
        <begin position="75"/>
        <end position="81"/>
    </location>
</feature>
<feature type="strand" evidence="10">
    <location>
        <begin position="84"/>
        <end position="92"/>
    </location>
</feature>
<feature type="strand" evidence="10">
    <location>
        <begin position="100"/>
        <end position="105"/>
    </location>
</feature>
<feature type="strand" evidence="10">
    <location>
        <begin position="112"/>
        <end position="118"/>
    </location>
</feature>
<feature type="helix" evidence="10">
    <location>
        <begin position="119"/>
        <end position="122"/>
    </location>
</feature>
<feature type="strand" evidence="10">
    <location>
        <begin position="126"/>
        <end position="128"/>
    </location>
</feature>
<feature type="strand" evidence="10">
    <location>
        <begin position="135"/>
        <end position="143"/>
    </location>
</feature>
<feature type="strand" evidence="10">
    <location>
        <begin position="152"/>
        <end position="163"/>
    </location>
</feature>
<feature type="strand" evidence="10">
    <location>
        <begin position="166"/>
        <end position="173"/>
    </location>
</feature>
<feature type="turn" evidence="10">
    <location>
        <begin position="174"/>
        <end position="176"/>
    </location>
</feature>
<feature type="strand" evidence="10">
    <location>
        <begin position="179"/>
        <end position="182"/>
    </location>
</feature>
<feature type="helix" evidence="10">
    <location>
        <begin position="186"/>
        <end position="189"/>
    </location>
</feature>
<feature type="strand" evidence="10">
    <location>
        <begin position="194"/>
        <end position="200"/>
    </location>
</feature>
<feature type="helix" evidence="10">
    <location>
        <begin position="201"/>
        <end position="203"/>
    </location>
</feature>
<feature type="strand" evidence="10">
    <location>
        <begin position="205"/>
        <end position="210"/>
    </location>
</feature>
<feature type="helix" evidence="10">
    <location>
        <begin position="211"/>
        <end position="213"/>
    </location>
</feature>
<feature type="strand" evidence="10">
    <location>
        <begin position="215"/>
        <end position="220"/>
    </location>
</feature>
<feature type="turn" evidence="10">
    <location>
        <begin position="221"/>
        <end position="223"/>
    </location>
</feature>
<feature type="strand" evidence="10">
    <location>
        <begin position="226"/>
        <end position="231"/>
    </location>
</feature>
<feature type="strand" evidence="10">
    <location>
        <begin position="233"/>
        <end position="243"/>
    </location>
</feature>
<feature type="turn" evidence="10">
    <location>
        <begin position="244"/>
        <end position="247"/>
    </location>
</feature>
<feature type="strand" evidence="10">
    <location>
        <begin position="248"/>
        <end position="253"/>
    </location>
</feature>
<feature type="turn" evidence="10">
    <location>
        <begin position="254"/>
        <end position="257"/>
    </location>
</feature>
<feature type="strand" evidence="10">
    <location>
        <begin position="258"/>
        <end position="263"/>
    </location>
</feature>
<feature type="turn" evidence="10">
    <location>
        <begin position="264"/>
        <end position="267"/>
    </location>
</feature>
<feature type="strand" evidence="10">
    <location>
        <begin position="268"/>
        <end position="272"/>
    </location>
</feature>
<feature type="strand" evidence="10">
    <location>
        <begin position="277"/>
        <end position="284"/>
    </location>
</feature>
<feature type="strand" evidence="10">
    <location>
        <begin position="288"/>
        <end position="298"/>
    </location>
</feature>
<feature type="strand" evidence="10">
    <location>
        <begin position="306"/>
        <end position="312"/>
    </location>
</feature>
<feature type="turn" evidence="10">
    <location>
        <begin position="313"/>
        <end position="316"/>
    </location>
</feature>
<feature type="strand" evidence="10">
    <location>
        <begin position="317"/>
        <end position="326"/>
    </location>
</feature>
<feature type="strand" evidence="10">
    <location>
        <begin position="328"/>
        <end position="333"/>
    </location>
</feature>
<feature type="strand" evidence="10">
    <location>
        <begin position="339"/>
        <end position="344"/>
    </location>
</feature>
<feature type="turn" evidence="10">
    <location>
        <begin position="345"/>
        <end position="348"/>
    </location>
</feature>
<feature type="strand" evidence="10">
    <location>
        <begin position="349"/>
        <end position="354"/>
    </location>
</feature>
<feature type="turn" evidence="10">
    <location>
        <begin position="355"/>
        <end position="358"/>
    </location>
</feature>
<feature type="strand" evidence="10">
    <location>
        <begin position="359"/>
        <end position="365"/>
    </location>
</feature>
<feature type="strand" evidence="10">
    <location>
        <begin position="367"/>
        <end position="375"/>
    </location>
</feature>
<feature type="strand" evidence="10">
    <location>
        <begin position="379"/>
        <end position="386"/>
    </location>
</feature>
<feature type="turn" evidence="10">
    <location>
        <begin position="392"/>
        <end position="394"/>
    </location>
</feature>
<feature type="strand" evidence="10">
    <location>
        <begin position="405"/>
        <end position="410"/>
    </location>
</feature>
<feature type="turn" evidence="10">
    <location>
        <begin position="411"/>
        <end position="414"/>
    </location>
</feature>
<feature type="strand" evidence="10">
    <location>
        <begin position="415"/>
        <end position="421"/>
    </location>
</feature>
<feature type="strand" evidence="10">
    <location>
        <begin position="423"/>
        <end position="431"/>
    </location>
</feature>
<feature type="strand" evidence="10">
    <location>
        <begin position="437"/>
        <end position="442"/>
    </location>
</feature>
<feature type="turn" evidence="10">
    <location>
        <begin position="443"/>
        <end position="446"/>
    </location>
</feature>
<feature type="strand" evidence="10">
    <location>
        <begin position="447"/>
        <end position="453"/>
    </location>
</feature>
<dbReference type="EMBL" id="AE016823">
    <property type="protein sequence ID" value="AAS69409.1"/>
    <property type="molecule type" value="Genomic_DNA"/>
</dbReference>
<dbReference type="RefSeq" id="WP_001087680.1">
    <property type="nucleotide sequence ID" value="NC_005823.1"/>
</dbReference>
<dbReference type="PDB" id="3BWS">
    <property type="method" value="X-ray"/>
    <property type="resolution" value="1.99 A"/>
    <property type="chains" value="A/B=34-456"/>
</dbReference>
<dbReference type="PDBsum" id="3BWS"/>
<dbReference type="SMR" id="Q72U69"/>
<dbReference type="KEGG" id="lic:LIC_10793"/>
<dbReference type="HOGENOM" id="CLU_049724_0_0_12"/>
<dbReference type="EvolutionaryTrace" id="Q72U69"/>
<dbReference type="Proteomes" id="UP000007037">
    <property type="component" value="Chromosome I"/>
</dbReference>
<dbReference type="GO" id="GO:0009279">
    <property type="term" value="C:cell outer membrane"/>
    <property type="evidence" value="ECO:0000314"/>
    <property type="project" value="UniProtKB"/>
</dbReference>
<dbReference type="GO" id="GO:0010756">
    <property type="term" value="P:positive regulation of plasminogen activation"/>
    <property type="evidence" value="ECO:0000353"/>
    <property type="project" value="UniProtKB"/>
</dbReference>
<dbReference type="FunFam" id="2.130.10.10:FF:000695">
    <property type="entry name" value="Lactonase, 7-bladed beta-propeller domain protein"/>
    <property type="match status" value="1"/>
</dbReference>
<dbReference type="Gene3D" id="2.60.40.3070">
    <property type="match status" value="1"/>
</dbReference>
<dbReference type="Gene3D" id="2.130.10.10">
    <property type="entry name" value="YVTN repeat-like/Quinoprotein amine dehydrogenase"/>
    <property type="match status" value="1"/>
</dbReference>
<dbReference type="InterPro" id="IPR051200">
    <property type="entry name" value="Host-pathogen_enzymatic-act"/>
</dbReference>
<dbReference type="InterPro" id="IPR019405">
    <property type="entry name" value="Lactonase_7-beta_prop"/>
</dbReference>
<dbReference type="InterPro" id="IPR011045">
    <property type="entry name" value="N2O_reductase_N"/>
</dbReference>
<dbReference type="InterPro" id="IPR015943">
    <property type="entry name" value="WD40/YVTN_repeat-like_dom_sf"/>
</dbReference>
<dbReference type="PANTHER" id="PTHR47197:SF3">
    <property type="entry name" value="DIHYDRO-HEME D1 DEHYDROGENASE"/>
    <property type="match status" value="1"/>
</dbReference>
<dbReference type="PANTHER" id="PTHR47197">
    <property type="entry name" value="PROTEIN NIRF"/>
    <property type="match status" value="1"/>
</dbReference>
<dbReference type="Pfam" id="PF10282">
    <property type="entry name" value="Lactonase"/>
    <property type="match status" value="1"/>
</dbReference>
<dbReference type="SUPFAM" id="SSF50974">
    <property type="entry name" value="Nitrous oxide reductase, N-terminal domain"/>
    <property type="match status" value="1"/>
</dbReference>
<comment type="function">
    <text evidence="4">May be involved in virulence. Binds human plasminogen (PLG) and stimulates its proteolytic cleavage to enzymatically active plasmin in the presence of an urokinase-type PLG activator in vitro. Activated plasmin has proteolytic activity which may help the bacteria to spread throughout the host by degrading extracellular matrix components, facilitating tissue penetration and invasion.</text>
</comment>
<comment type="subcellular location">
    <subcellularLocation>
        <location evidence="2 4">Cell outer membrane</location>
    </subcellularLocation>
</comment>
<comment type="biotechnology">
    <text evidence="2">May be useful for detecting a broad spectrum of Leptospira infection in humans and animals due to its presence in several pathogenic serovars of L.interrogans including copenhageni, canicola, hardjo, icterohaemorrhagiae and pomona, and also in L.borgpetersenii hardjo. May be used for serodiagnosis of both early and convalescent phases of leptospirosis infectious disease.</text>
</comment>
<name>LP49_LEPIC</name>
<sequence length="456" mass="51845">MNSNPKKKFLKLIKIKSDIILLIPIFLFLVCCKSGDFSLLSSPINREKNGTEIVKFSIHPYKGTVIRLGEEILPFKVLEMDKNIALVEMAIPVYKDEKEIELKLSSPGFQNSSYRIRKPEELNEKLIALDKEGITHRFISRFKTGFQPKSVRFIDNTRLAIPLLEDEGMDVLDINSGQTVRLSPPEKYKKKLGFVETISIPEHNELWVSQMQANAVHVFDLKTLAYKATVDLTGKWSKILLYDPIRDLVYCSNWISEDISVIDRKTKLEIRKTDKIGLPRGLLLSKDGKELYIAQFSASNQESGGGRLGIYSMDKEKLIDTIGPPGNKRHIVSGNTENKIYVSDMCCSKIEVYDLKEKKVQKSIPVFDKPNTIALSPDGKYLYVSCRGPNHPTEGYLKKGLVLGKVYVIDTTTDTVKEFWEAGNQPTGLDVSPDNRYLVISDFLDHQIRVYRRDGF</sequence>
<evidence type="ECO:0000255" key="1"/>
<evidence type="ECO:0000269" key="2">
    <source>
    </source>
</evidence>
<evidence type="ECO:0000269" key="3">
    <source>
    </source>
</evidence>
<evidence type="ECO:0000269" key="4">
    <source>
    </source>
</evidence>
<evidence type="ECO:0000303" key="5">
    <source>
    </source>
</evidence>
<evidence type="ECO:0000303" key="6">
    <source>
    </source>
</evidence>
<evidence type="ECO:0000312" key="7">
    <source>
        <dbReference type="EMBL" id="AAS69409.1"/>
    </source>
</evidence>
<evidence type="ECO:0000312" key="8">
    <source>
        <dbReference type="Proteomes" id="UP000007037"/>
    </source>
</evidence>
<evidence type="ECO:0007744" key="9">
    <source>
        <dbReference type="PDB" id="3BWS"/>
    </source>
</evidence>
<evidence type="ECO:0007829" key="10">
    <source>
        <dbReference type="PDB" id="3BWS"/>
    </source>
</evidence>
<protein>
    <recommendedName>
        <fullName evidence="6">Antigen Lp49</fullName>
    </recommendedName>
    <alternativeName>
        <fullName evidence="5">Leptospiral 49 kilodalton protein</fullName>
        <shortName evidence="5">Lp49</shortName>
    </alternativeName>
</protein>